<feature type="chain" id="PRO_0000336000" description="PHD finger protein 20-like protein 1">
    <location>
        <begin position="1"/>
        <end position="316"/>
    </location>
</feature>
<feature type="domain" description="Tudor 1">
    <location>
        <begin position="11"/>
        <end position="71"/>
    </location>
</feature>
<feature type="domain" description="Tudor 2">
    <location>
        <begin position="85"/>
        <end position="141"/>
    </location>
</feature>
<feature type="region of interest" description="Disordered" evidence="3">
    <location>
        <begin position="183"/>
        <end position="237"/>
    </location>
</feature>
<feature type="compositionally biased region" description="Polar residues" evidence="3">
    <location>
        <begin position="186"/>
        <end position="197"/>
    </location>
</feature>
<feature type="compositionally biased region" description="Basic and acidic residues" evidence="3">
    <location>
        <begin position="198"/>
        <end position="218"/>
    </location>
</feature>
<feature type="cross-link" description="Glycyl lysine isopeptide (Lys-Gly) (interchain with G-Cter in SUMO2)" evidence="1">
    <location>
        <position position="75"/>
    </location>
</feature>
<feature type="cross-link" description="Glycyl lysine isopeptide (Lys-Gly) (interchain with G-Cter in SUMO2)" evidence="1">
    <location>
        <position position="79"/>
    </location>
</feature>
<proteinExistence type="evidence at transcript level"/>
<comment type="function">
    <text evidence="1 2">Is a negative regulator of proteasomal degradation of a set of methylated proteins, including DNMT1 and SOX2 (By similarity). Involved in the maintainance of embryonic stem cells pluripotency, through the regulation of SOX2 levels (By similarity).</text>
</comment>
<comment type="subunit">
    <text evidence="1">Interacts with methylated DNMT1 (DNMT1K142me1). Interacts with SOX2.</text>
</comment>
<comment type="subcellular location">
    <subcellularLocation>
        <location evidence="1">Nucleus</location>
    </subcellularLocation>
    <text evidence="1">Localized to the perinucleolar region.</text>
</comment>
<name>P20L1_BOVIN</name>
<sequence length="316" mass="36160">MSKKPPNRPGITFEIGARLEALDYLQKWYPSRIEKIDYEEGKMLVHFERWSHRYDEWIYWDSNRLRPLERPALRKEGLKDEEDFFDFKAGEEVLARWTDCRYYPAKIEAINKEGTFTVQFYDGVIRCLKRMHIKAMPEDAKGQVKAQHPLSWCCPSDPAGSCNQSMGSEDWIALVKAAAAAAAKNKTGNKPRTSANSNKDKEKDERKWFKVPSKKEETSTSITTPEVEKKEDLPTSSETFVGLHVENVPKMVFPQPESTLTNKRKNNQGNSFQAKRARLNKITGLLASKAVGVDGAEKKEDYNETAPMLEQVLHSL</sequence>
<accession>A2VE56</accession>
<protein>
    <recommendedName>
        <fullName>PHD finger protein 20-like protein 1</fullName>
    </recommendedName>
</protein>
<dbReference type="EMBL" id="BC133583">
    <property type="protein sequence ID" value="AAI33584.1"/>
    <property type="molecule type" value="mRNA"/>
</dbReference>
<dbReference type="RefSeq" id="NP_001075901.1">
    <property type="nucleotide sequence ID" value="NM_001082432.2"/>
</dbReference>
<dbReference type="SMR" id="A2VE56"/>
<dbReference type="FunCoup" id="A2VE56">
    <property type="interactions" value="5"/>
</dbReference>
<dbReference type="STRING" id="9913.ENSBTAP00000009033"/>
<dbReference type="PaxDb" id="9913-ENSBTAP00000009033"/>
<dbReference type="Ensembl" id="ENSBTAT00000009040.6">
    <property type="protein sequence ID" value="ENSBTAP00000009040.5"/>
    <property type="gene ID" value="ENSBTAG00000006869.7"/>
</dbReference>
<dbReference type="VEuPathDB" id="HostDB:ENSBTAG00000006869"/>
<dbReference type="VGNC" id="VGNC:32820">
    <property type="gene designation" value="PHF20L1"/>
</dbReference>
<dbReference type="eggNOG" id="KOG1844">
    <property type="taxonomic scope" value="Eukaryota"/>
</dbReference>
<dbReference type="GeneTree" id="ENSGT00940000156215"/>
<dbReference type="HOGENOM" id="CLU_1053614_0_0_1"/>
<dbReference type="InParanoid" id="A2VE56"/>
<dbReference type="OrthoDB" id="161570at2759"/>
<dbReference type="Proteomes" id="UP000009136">
    <property type="component" value="Chromosome 14"/>
</dbReference>
<dbReference type="Bgee" id="ENSBTAG00000006869">
    <property type="expression patterns" value="Expressed in neutrophil and 114 other cell types or tissues"/>
</dbReference>
<dbReference type="GO" id="GO:0005634">
    <property type="term" value="C:nucleus"/>
    <property type="evidence" value="ECO:0007669"/>
    <property type="project" value="UniProtKB-SubCell"/>
</dbReference>
<dbReference type="GO" id="GO:0006355">
    <property type="term" value="P:regulation of DNA-templated transcription"/>
    <property type="evidence" value="ECO:0007669"/>
    <property type="project" value="InterPro"/>
</dbReference>
<dbReference type="CDD" id="cd20104">
    <property type="entry name" value="MBT_PHF20L1-like"/>
    <property type="match status" value="1"/>
</dbReference>
<dbReference type="CDD" id="cd20454">
    <property type="entry name" value="Tudor_PHF20L1"/>
    <property type="match status" value="1"/>
</dbReference>
<dbReference type="FunFam" id="2.30.30.140:FF:000049">
    <property type="entry name" value="PHD finger protein 20 (Predicted)"/>
    <property type="match status" value="1"/>
</dbReference>
<dbReference type="Gene3D" id="2.30.30.140">
    <property type="match status" value="2"/>
</dbReference>
<dbReference type="InterPro" id="IPR014002">
    <property type="entry name" value="Agenet_dom_plant"/>
</dbReference>
<dbReference type="InterPro" id="IPR040477">
    <property type="entry name" value="KDM4-like_Tudor"/>
</dbReference>
<dbReference type="InterPro" id="IPR004092">
    <property type="entry name" value="Mbt"/>
</dbReference>
<dbReference type="InterPro" id="IPR043449">
    <property type="entry name" value="PHF20-like"/>
</dbReference>
<dbReference type="InterPro" id="IPR002999">
    <property type="entry name" value="Tudor"/>
</dbReference>
<dbReference type="InterPro" id="IPR047405">
    <property type="entry name" value="Tudor_PHF20L1"/>
</dbReference>
<dbReference type="PANTHER" id="PTHR15856:SF26">
    <property type="entry name" value="PHD FINGER PROTEIN 20-LIKE PROTEIN 1"/>
    <property type="match status" value="1"/>
</dbReference>
<dbReference type="PANTHER" id="PTHR15856">
    <property type="entry name" value="PHD FINGER PROTEIN 20-RELATED"/>
    <property type="match status" value="1"/>
</dbReference>
<dbReference type="Pfam" id="PF02820">
    <property type="entry name" value="MBT"/>
    <property type="match status" value="1"/>
</dbReference>
<dbReference type="Pfam" id="PF18104">
    <property type="entry name" value="Tudor_2"/>
    <property type="match status" value="1"/>
</dbReference>
<dbReference type="SMART" id="SM00743">
    <property type="entry name" value="Agenet"/>
    <property type="match status" value="2"/>
</dbReference>
<dbReference type="SMART" id="SM00333">
    <property type="entry name" value="TUDOR"/>
    <property type="match status" value="2"/>
</dbReference>
<dbReference type="SUPFAM" id="SSF63748">
    <property type="entry name" value="Tudor/PWWP/MBT"/>
    <property type="match status" value="2"/>
</dbReference>
<keyword id="KW-1017">Isopeptide bond</keyword>
<keyword id="KW-0539">Nucleus</keyword>
<keyword id="KW-1185">Reference proteome</keyword>
<keyword id="KW-0677">Repeat</keyword>
<keyword id="KW-0832">Ubl conjugation</keyword>
<organism>
    <name type="scientific">Bos taurus</name>
    <name type="common">Bovine</name>
    <dbReference type="NCBI Taxonomy" id="9913"/>
    <lineage>
        <taxon>Eukaryota</taxon>
        <taxon>Metazoa</taxon>
        <taxon>Chordata</taxon>
        <taxon>Craniata</taxon>
        <taxon>Vertebrata</taxon>
        <taxon>Euteleostomi</taxon>
        <taxon>Mammalia</taxon>
        <taxon>Eutheria</taxon>
        <taxon>Laurasiatheria</taxon>
        <taxon>Artiodactyla</taxon>
        <taxon>Ruminantia</taxon>
        <taxon>Pecora</taxon>
        <taxon>Bovidae</taxon>
        <taxon>Bovinae</taxon>
        <taxon>Bos</taxon>
    </lineage>
</organism>
<gene>
    <name type="primary">PHF20L1</name>
</gene>
<evidence type="ECO:0000250" key="1">
    <source>
        <dbReference type="UniProtKB" id="A8MW92"/>
    </source>
</evidence>
<evidence type="ECO:0000250" key="2">
    <source>
        <dbReference type="UniProtKB" id="Q8CCJ9"/>
    </source>
</evidence>
<evidence type="ECO:0000256" key="3">
    <source>
        <dbReference type="SAM" id="MobiDB-lite"/>
    </source>
</evidence>
<reference key="1">
    <citation type="submission" date="2007-02" db="EMBL/GenBank/DDBJ databases">
        <authorList>
            <consortium name="NIH - Mammalian Gene Collection (MGC) project"/>
        </authorList>
    </citation>
    <scope>NUCLEOTIDE SEQUENCE [LARGE SCALE MRNA]</scope>
    <source>
        <strain>Hereford</strain>
        <tissue>Fetal pons</tissue>
    </source>
</reference>